<sequence length="188" mass="21028">MTASPCAFPVQFRQPSVSGLSQITSSLYISSGVAANNRLMLSSNRISTVINVSVEVVNALYEDIHYVQVPVADTPTSRLCDFFDPIADHIHSVEMKQGRTLLHCAAGVSRSAALCLAYLMKYHAMSLLDAHTWTKSCRPIIRPNNGFWEQLIHYEFQLFGRNTVHMVSSPVGMIPDIYEKEVRQMIPL</sequence>
<reference key="1">
    <citation type="journal article" date="2005" name="BMC Genomics">
        <title>Characterization of 954 bovine full-CDS cDNA sequences.</title>
        <authorList>
            <person name="Harhay G.P."/>
            <person name="Sonstegard T.S."/>
            <person name="Keele J.W."/>
            <person name="Heaton M.P."/>
            <person name="Clawson M.L."/>
            <person name="Snelling W.M."/>
            <person name="Wiedmann R.T."/>
            <person name="Van Tassell C.P."/>
            <person name="Smith T.P.L."/>
        </authorList>
    </citation>
    <scope>NUCLEOTIDE SEQUENCE [LARGE SCALE MRNA]</scope>
</reference>
<reference key="2">
    <citation type="submission" date="2005-11" db="EMBL/GenBank/DDBJ databases">
        <authorList>
            <consortium name="NIH - Mammalian Gene Collection (MGC) project"/>
        </authorList>
    </citation>
    <scope>NUCLEOTIDE SEQUENCE [LARGE SCALE MRNA]</scope>
    <source>
        <strain>Crossbred X Angus</strain>
        <tissue>Liver</tissue>
    </source>
</reference>
<dbReference type="EC" id="3.1.3.16" evidence="2"/>
<dbReference type="EC" id="3.1.3.48" evidence="2"/>
<dbReference type="EMBL" id="BT021175">
    <property type="protein sequence ID" value="AAX31357.1"/>
    <property type="molecule type" value="mRNA"/>
</dbReference>
<dbReference type="EMBL" id="BC110013">
    <property type="protein sequence ID" value="AAI10014.1"/>
    <property type="molecule type" value="mRNA"/>
</dbReference>
<dbReference type="RefSeq" id="NP_001029431.1">
    <property type="nucleotide sequence ID" value="NM_001034259.1"/>
</dbReference>
<dbReference type="SMR" id="Q5BIP9"/>
<dbReference type="FunCoup" id="Q5BIP9">
    <property type="interactions" value="203"/>
</dbReference>
<dbReference type="STRING" id="9913.ENSBTAP00000023205"/>
<dbReference type="PaxDb" id="9913-ENSBTAP00000023205"/>
<dbReference type="GeneID" id="505912"/>
<dbReference type="KEGG" id="bta:505912"/>
<dbReference type="CTD" id="150290"/>
<dbReference type="eggNOG" id="KOG1718">
    <property type="taxonomic scope" value="Eukaryota"/>
</dbReference>
<dbReference type="HOGENOM" id="CLU_027074_3_4_1"/>
<dbReference type="InParanoid" id="Q5BIP9"/>
<dbReference type="OrthoDB" id="285418at2759"/>
<dbReference type="TreeFam" id="TF316009"/>
<dbReference type="Proteomes" id="UP000009136">
    <property type="component" value="Unplaced"/>
</dbReference>
<dbReference type="GO" id="GO:0005737">
    <property type="term" value="C:cytoplasm"/>
    <property type="evidence" value="ECO:0000250"/>
    <property type="project" value="UniProtKB"/>
</dbReference>
<dbReference type="GO" id="GO:0005743">
    <property type="term" value="C:mitochondrial inner membrane"/>
    <property type="evidence" value="ECO:0007669"/>
    <property type="project" value="UniProtKB-SubCell"/>
</dbReference>
<dbReference type="GO" id="GO:0005634">
    <property type="term" value="C:nucleus"/>
    <property type="evidence" value="ECO:0000250"/>
    <property type="project" value="UniProtKB"/>
</dbReference>
<dbReference type="GO" id="GO:0017017">
    <property type="term" value="F:MAP kinase tyrosine/serine/threonine phosphatase activity"/>
    <property type="evidence" value="ECO:0007669"/>
    <property type="project" value="InterPro"/>
</dbReference>
<dbReference type="GO" id="GO:0016791">
    <property type="term" value="F:phosphatase activity"/>
    <property type="evidence" value="ECO:0000250"/>
    <property type="project" value="UniProtKB"/>
</dbReference>
<dbReference type="GO" id="GO:0004722">
    <property type="term" value="F:protein serine/threonine phosphatase activity"/>
    <property type="evidence" value="ECO:0007669"/>
    <property type="project" value="UniProtKB-EC"/>
</dbReference>
<dbReference type="GO" id="GO:0004725">
    <property type="term" value="F:protein tyrosine phosphatase activity"/>
    <property type="evidence" value="ECO:0000318"/>
    <property type="project" value="GO_Central"/>
</dbReference>
<dbReference type="GO" id="GO:0008138">
    <property type="term" value="F:protein tyrosine/serine/threonine phosphatase activity"/>
    <property type="evidence" value="ECO:0000250"/>
    <property type="project" value="UniProtKB"/>
</dbReference>
<dbReference type="GO" id="GO:0016311">
    <property type="term" value="P:dephosphorylation"/>
    <property type="evidence" value="ECO:0000250"/>
    <property type="project" value="UniProtKB"/>
</dbReference>
<dbReference type="GO" id="GO:0035970">
    <property type="term" value="P:peptidyl-threonine dephosphorylation"/>
    <property type="evidence" value="ECO:0000250"/>
    <property type="project" value="UniProtKB"/>
</dbReference>
<dbReference type="GO" id="GO:0035335">
    <property type="term" value="P:peptidyl-tyrosine dephosphorylation"/>
    <property type="evidence" value="ECO:0000250"/>
    <property type="project" value="UniProtKB"/>
</dbReference>
<dbReference type="CDD" id="cd14573">
    <property type="entry name" value="DUSP18_21"/>
    <property type="match status" value="1"/>
</dbReference>
<dbReference type="FunFam" id="3.90.190.10:FF:000049">
    <property type="entry name" value="Dual specificity protein phosphatase 14"/>
    <property type="match status" value="1"/>
</dbReference>
<dbReference type="Gene3D" id="3.90.190.10">
    <property type="entry name" value="Protein tyrosine phosphatase superfamily"/>
    <property type="match status" value="1"/>
</dbReference>
<dbReference type="InterPro" id="IPR020420">
    <property type="entry name" value="Atypical_DUSP_subfamB"/>
</dbReference>
<dbReference type="InterPro" id="IPR000340">
    <property type="entry name" value="Dual-sp_phosphatase_cat-dom"/>
</dbReference>
<dbReference type="InterPro" id="IPR029021">
    <property type="entry name" value="Prot-tyrosine_phosphatase-like"/>
</dbReference>
<dbReference type="InterPro" id="IPR016130">
    <property type="entry name" value="Tyr_Pase_AS"/>
</dbReference>
<dbReference type="InterPro" id="IPR000387">
    <property type="entry name" value="Tyr_Pase_dom"/>
</dbReference>
<dbReference type="InterPro" id="IPR020422">
    <property type="entry name" value="TYR_PHOSPHATASE_DUAL_dom"/>
</dbReference>
<dbReference type="PANTHER" id="PTHR46495:SF2">
    <property type="entry name" value="DUAL SPECIFICITY PROTEIN PHOSPHATASE 18"/>
    <property type="match status" value="1"/>
</dbReference>
<dbReference type="PANTHER" id="PTHR46495">
    <property type="entry name" value="DUAL SPECIFICITY PROTEIN PHOSPHATASE 21"/>
    <property type="match status" value="1"/>
</dbReference>
<dbReference type="Pfam" id="PF00782">
    <property type="entry name" value="DSPc"/>
    <property type="match status" value="1"/>
</dbReference>
<dbReference type="PRINTS" id="PR01908">
    <property type="entry name" value="ADSPHPHTASE"/>
</dbReference>
<dbReference type="PRINTS" id="PR01910">
    <property type="entry name" value="ADSPHPHTASEB"/>
</dbReference>
<dbReference type="SMART" id="SM00195">
    <property type="entry name" value="DSPc"/>
    <property type="match status" value="1"/>
</dbReference>
<dbReference type="SUPFAM" id="SSF52799">
    <property type="entry name" value="(Phosphotyrosine protein) phosphatases II"/>
    <property type="match status" value="1"/>
</dbReference>
<dbReference type="PROSITE" id="PS00383">
    <property type="entry name" value="TYR_PHOSPHATASE_1"/>
    <property type="match status" value="1"/>
</dbReference>
<dbReference type="PROSITE" id="PS50056">
    <property type="entry name" value="TYR_PHOSPHATASE_2"/>
    <property type="match status" value="1"/>
</dbReference>
<dbReference type="PROSITE" id="PS50054">
    <property type="entry name" value="TYR_PHOSPHATASE_DUAL"/>
    <property type="match status" value="1"/>
</dbReference>
<accession>Q5BIP9</accession>
<accession>Q32KN1</accession>
<protein>
    <recommendedName>
        <fullName>Dual specificity protein phosphatase 18</fullName>
        <ecNumber evidence="2">3.1.3.16</ecNumber>
        <ecNumber evidence="2">3.1.3.48</ecNumber>
    </recommendedName>
</protein>
<keyword id="KW-0963">Cytoplasm</keyword>
<keyword id="KW-0378">Hydrolase</keyword>
<keyword id="KW-0472">Membrane</keyword>
<keyword id="KW-0496">Mitochondrion</keyword>
<keyword id="KW-0999">Mitochondrion inner membrane</keyword>
<keyword id="KW-0539">Nucleus</keyword>
<keyword id="KW-0904">Protein phosphatase</keyword>
<keyword id="KW-1185">Reference proteome</keyword>
<proteinExistence type="evidence at transcript level"/>
<evidence type="ECO:0000250" key="1"/>
<evidence type="ECO:0000250" key="2">
    <source>
        <dbReference type="UniProtKB" id="Q8NEJ0"/>
    </source>
</evidence>
<evidence type="ECO:0000250" key="3">
    <source>
        <dbReference type="UniProtKB" id="Q8VE01"/>
    </source>
</evidence>
<evidence type="ECO:0000255" key="4">
    <source>
        <dbReference type="PROSITE-ProRule" id="PRU00160"/>
    </source>
</evidence>
<evidence type="ECO:0000255" key="5">
    <source>
        <dbReference type="PROSITE-ProRule" id="PRU10044"/>
    </source>
</evidence>
<evidence type="ECO:0000305" key="6"/>
<comment type="function">
    <text evidence="2">Can dephosphorylate single and diphosphorylated synthetic MAPK peptides, with preference for the phosphotyrosine and diphosphorylated forms over phosphothreonine. In vitro, dephosphorylates p-nitrophenyl phosphate (pNPP).</text>
</comment>
<comment type="catalytic activity">
    <reaction evidence="5">
        <text>O-phospho-L-tyrosyl-[protein] + H2O = L-tyrosyl-[protein] + phosphate</text>
        <dbReference type="Rhea" id="RHEA:10684"/>
        <dbReference type="Rhea" id="RHEA-COMP:10136"/>
        <dbReference type="Rhea" id="RHEA-COMP:20101"/>
        <dbReference type="ChEBI" id="CHEBI:15377"/>
        <dbReference type="ChEBI" id="CHEBI:43474"/>
        <dbReference type="ChEBI" id="CHEBI:46858"/>
        <dbReference type="ChEBI" id="CHEBI:61978"/>
        <dbReference type="EC" id="3.1.3.48"/>
    </reaction>
</comment>
<comment type="catalytic activity">
    <reaction evidence="2">
        <text>O-phospho-L-seryl-[protein] + H2O = L-seryl-[protein] + phosphate</text>
        <dbReference type="Rhea" id="RHEA:20629"/>
        <dbReference type="Rhea" id="RHEA-COMP:9863"/>
        <dbReference type="Rhea" id="RHEA-COMP:11604"/>
        <dbReference type="ChEBI" id="CHEBI:15377"/>
        <dbReference type="ChEBI" id="CHEBI:29999"/>
        <dbReference type="ChEBI" id="CHEBI:43474"/>
        <dbReference type="ChEBI" id="CHEBI:83421"/>
        <dbReference type="EC" id="3.1.3.16"/>
    </reaction>
</comment>
<comment type="catalytic activity">
    <reaction evidence="2">
        <text>O-phospho-L-threonyl-[protein] + H2O = L-threonyl-[protein] + phosphate</text>
        <dbReference type="Rhea" id="RHEA:47004"/>
        <dbReference type="Rhea" id="RHEA-COMP:11060"/>
        <dbReference type="Rhea" id="RHEA-COMP:11605"/>
        <dbReference type="ChEBI" id="CHEBI:15377"/>
        <dbReference type="ChEBI" id="CHEBI:30013"/>
        <dbReference type="ChEBI" id="CHEBI:43474"/>
        <dbReference type="ChEBI" id="CHEBI:61977"/>
        <dbReference type="EC" id="3.1.3.16"/>
    </reaction>
</comment>
<comment type="subcellular location">
    <subcellularLocation>
        <location evidence="3">Cytoplasm</location>
    </subcellularLocation>
    <subcellularLocation>
        <location evidence="2">Nucleus</location>
    </subcellularLocation>
    <subcellularLocation>
        <location evidence="3">Mitochondrion inner membrane</location>
        <topology evidence="3">Peripheral membrane protein</topology>
        <orientation evidence="3">Intermembrane side</orientation>
    </subcellularLocation>
    <text evidence="3">Translocates to cytoplasm in response to apoptotic stimuli such as staurosporine treatment.</text>
</comment>
<comment type="similarity">
    <text evidence="6">Belongs to the protein-tyrosine phosphatase family. Non-receptor class dual specificity subfamily.</text>
</comment>
<gene>
    <name type="primary">DUSP18</name>
</gene>
<name>DUS18_BOVIN</name>
<organism>
    <name type="scientific">Bos taurus</name>
    <name type="common">Bovine</name>
    <dbReference type="NCBI Taxonomy" id="9913"/>
    <lineage>
        <taxon>Eukaryota</taxon>
        <taxon>Metazoa</taxon>
        <taxon>Chordata</taxon>
        <taxon>Craniata</taxon>
        <taxon>Vertebrata</taxon>
        <taxon>Euteleostomi</taxon>
        <taxon>Mammalia</taxon>
        <taxon>Eutheria</taxon>
        <taxon>Laurasiatheria</taxon>
        <taxon>Artiodactyla</taxon>
        <taxon>Ruminantia</taxon>
        <taxon>Pecora</taxon>
        <taxon>Bovidae</taxon>
        <taxon>Bovinae</taxon>
        <taxon>Bos</taxon>
    </lineage>
</organism>
<feature type="chain" id="PRO_0000094827" description="Dual specificity protein phosphatase 18">
    <location>
        <begin position="1"/>
        <end position="188"/>
    </location>
</feature>
<feature type="domain" description="Tyrosine-protein phosphatase" evidence="4">
    <location>
        <begin position="19"/>
        <end position="160"/>
    </location>
</feature>
<feature type="region of interest" description="Sufficient for mitochondrial localization" evidence="1">
    <location>
        <begin position="95"/>
        <end position="141"/>
    </location>
</feature>
<feature type="active site" description="Phosphocysteine intermediate" evidence="4">
    <location>
        <position position="104"/>
    </location>
</feature>
<feature type="sequence conflict" description="In Ref. 2; AAI10014." evidence="6" ref="2">
    <original>S</original>
    <variation>R</variation>
    <location>
        <position position="31"/>
    </location>
</feature>